<keyword id="KW-0446">Lipid-binding</keyword>
<keyword id="KW-0576">Peroxisome</keyword>
<protein>
    <recommendedName>
        <fullName>Oleate-induced peroxisomal protein POX18</fullName>
        <shortName>PXP-18</shortName>
    </recommendedName>
    <alternativeName>
        <fullName>Lipid-transfer protein</fullName>
    </alternativeName>
</protein>
<accession>Q00680</accession>
<dbReference type="EMBL" id="M61102">
    <property type="protein sequence ID" value="AAA34359.1"/>
    <property type="molecule type" value="Genomic_DNA"/>
</dbReference>
<dbReference type="PIR" id="JT0590">
    <property type="entry name" value="JT0590"/>
</dbReference>
<dbReference type="SMR" id="Q00680"/>
<dbReference type="OMA" id="DLPMAMK"/>
<dbReference type="UniPathway" id="UPA00199"/>
<dbReference type="GO" id="GO:0005829">
    <property type="term" value="C:cytosol"/>
    <property type="evidence" value="ECO:0007669"/>
    <property type="project" value="TreeGrafter"/>
</dbReference>
<dbReference type="GO" id="GO:0005777">
    <property type="term" value="C:peroxisome"/>
    <property type="evidence" value="ECO:0007669"/>
    <property type="project" value="UniProtKB-SubCell"/>
</dbReference>
<dbReference type="GO" id="GO:0008289">
    <property type="term" value="F:lipid binding"/>
    <property type="evidence" value="ECO:0007669"/>
    <property type="project" value="UniProtKB-KW"/>
</dbReference>
<dbReference type="GO" id="GO:0006631">
    <property type="term" value="P:fatty acid metabolic process"/>
    <property type="evidence" value="ECO:0007669"/>
    <property type="project" value="UniProtKB-UniPathway"/>
</dbReference>
<dbReference type="FunFam" id="3.30.1050.10:FF:000001">
    <property type="entry name" value="Putative Non-specific lipid-transfer protein"/>
    <property type="match status" value="1"/>
</dbReference>
<dbReference type="Gene3D" id="3.30.1050.10">
    <property type="entry name" value="SCP2 sterol-binding domain"/>
    <property type="match status" value="1"/>
</dbReference>
<dbReference type="InterPro" id="IPR003033">
    <property type="entry name" value="SCP2_sterol-bd_dom"/>
</dbReference>
<dbReference type="InterPro" id="IPR036527">
    <property type="entry name" value="SCP2_sterol-bd_dom_sf"/>
</dbReference>
<dbReference type="PANTHER" id="PTHR10094:SF25">
    <property type="entry name" value="SCP2 STEROL-BINDING DOMAIN-CONTAINING PROTEIN 1"/>
    <property type="match status" value="1"/>
</dbReference>
<dbReference type="PANTHER" id="PTHR10094">
    <property type="entry name" value="STEROL CARRIER PROTEIN 2 SCP-2 FAMILY PROTEIN"/>
    <property type="match status" value="1"/>
</dbReference>
<dbReference type="Pfam" id="PF02036">
    <property type="entry name" value="SCP2"/>
    <property type="match status" value="1"/>
</dbReference>
<dbReference type="SUPFAM" id="SSF55718">
    <property type="entry name" value="SCP-like"/>
    <property type="match status" value="1"/>
</dbReference>
<gene>
    <name type="primary">POX18</name>
</gene>
<organism>
    <name type="scientific">Candida maltosa</name>
    <name type="common">Yeast</name>
    <dbReference type="NCBI Taxonomy" id="5479"/>
    <lineage>
        <taxon>Eukaryota</taxon>
        <taxon>Fungi</taxon>
        <taxon>Dikarya</taxon>
        <taxon>Ascomycota</taxon>
        <taxon>Saccharomycotina</taxon>
        <taxon>Pichiomycetes</taxon>
        <taxon>Debaryomycetaceae</taxon>
        <taxon>Candida/Lodderomyces clade</taxon>
        <taxon>Candida</taxon>
    </lineage>
</organism>
<comment type="function">
    <text>Is involved in beta-oxidation of long-chain fatty acids. Its exact function is unknown, but possesses a nonspecific lipid-transfer activity, despite the absence of a cysteine residue thought to be essential for the activity of its mammalian counterparts.</text>
</comment>
<comment type="pathway">
    <text>Lipid metabolism; fatty acid metabolism.</text>
</comment>
<comment type="subunit">
    <text>Monomer.</text>
</comment>
<comment type="subcellular location">
    <subcellularLocation>
        <location>Peroxisome</location>
    </subcellularLocation>
</comment>
<comment type="induction">
    <text>By alkanes or fatty acids; repressed by glucose.</text>
</comment>
<sequence length="127" mass="13818">MSVEVDGFNASPLFKELHEGLADKSKAEEAVKAVNAVIVITLKNKEGKEQSWVLDLKKAGTLAKVDGAAPKGDVQLILKDVDFVKLANNKVNGQKLFMNGKLKVKGNMMKATAIESVFKKLDPRPKL</sequence>
<name>POX18_CANMA</name>
<feature type="initiator methionine" description="Removed" evidence="1">
    <location>
        <position position="1"/>
    </location>
</feature>
<feature type="chain" id="PRO_0000058527" description="Oleate-induced peroxisomal protein POX18">
    <location>
        <begin position="2"/>
        <end position="127"/>
    </location>
</feature>
<feature type="domain" description="SCP2" evidence="2">
    <location>
        <begin position="14"/>
        <end position="119"/>
    </location>
</feature>
<feature type="region of interest" description="Hydrophobic">
    <location>
        <begin position="33"/>
        <end position="41"/>
    </location>
</feature>
<feature type="region of interest" description="Hydrophilic">
    <location>
        <begin position="43"/>
        <end position="52"/>
    </location>
</feature>
<reference key="1">
    <citation type="journal article" date="1991" name="Gene">
        <title>Sequences of two tandem genes regulated by carbon sources, one being essential for n-alkane assimilation in Candida maltosa.</title>
        <authorList>
            <person name="Hwang C.W."/>
            <person name="Yano K."/>
            <person name="Takagi M."/>
        </authorList>
    </citation>
    <scope>NUCLEOTIDE SEQUENCE [GENOMIC DNA]</scope>
    <source>
        <strain>ATCC 28140 / CBS 5611 / IAM 12247 / JCM 1504 / NBRC 1977</strain>
    </source>
</reference>
<proteinExistence type="evidence at transcript level"/>
<evidence type="ECO:0000250" key="1"/>
<evidence type="ECO:0000255" key="2"/>